<protein>
    <recommendedName>
        <fullName>Cytochrome c-552</fullName>
    </recommendedName>
    <alternativeName>
        <fullName>Cytochrome c552</fullName>
    </alternativeName>
</protein>
<accession>Q5SME3</accession>
<evidence type="ECO:0000269" key="1">
    <source>
    </source>
</evidence>
<evidence type="ECO:0000305" key="2">
    <source>
    </source>
</evidence>
<evidence type="ECO:0007829" key="3">
    <source>
        <dbReference type="PDB" id="1DT1"/>
    </source>
</evidence>
<keyword id="KW-0002">3D-structure</keyword>
<keyword id="KW-0903">Direct protein sequencing</keyword>
<keyword id="KW-0249">Electron transport</keyword>
<keyword id="KW-0349">Heme</keyword>
<keyword id="KW-0408">Iron</keyword>
<keyword id="KW-0479">Metal-binding</keyword>
<keyword id="KW-0873">Pyrrolidone carboxylic acid</keyword>
<keyword id="KW-1185">Reference proteome</keyword>
<keyword id="KW-0732">Signal</keyword>
<keyword id="KW-0813">Transport</keyword>
<sequence length="148" mass="15974">MKRTLMAFLLLGGLALAQADGAKIYAQCAGCHQQNGQGIPGAFPPLAGHVAEILAKEGGREYLILVLLYGLQGQIEVKGMKYNGVMSSFAQLKDEEIAAVLNHIATAWGDAKKVKGFKPFTAEEVKKLRAKKLTPQQVLAERKKLGLK</sequence>
<organism>
    <name type="scientific">Thermus thermophilus (strain ATCC 27634 / DSM 579 / HB8)</name>
    <dbReference type="NCBI Taxonomy" id="300852"/>
    <lineage>
        <taxon>Bacteria</taxon>
        <taxon>Thermotogati</taxon>
        <taxon>Deinococcota</taxon>
        <taxon>Deinococci</taxon>
        <taxon>Thermales</taxon>
        <taxon>Thermaceae</taxon>
        <taxon>Thermus</taxon>
    </lineage>
</organism>
<feature type="signal peptide" evidence="1">
    <location>
        <begin position="1"/>
        <end position="17"/>
    </location>
</feature>
<feature type="chain" id="PRO_0000006533" description="Cytochrome c-552">
    <location>
        <begin position="18"/>
        <end position="148"/>
    </location>
</feature>
<feature type="binding site" description="covalent">
    <location>
        <position position="28"/>
    </location>
    <ligand>
        <name>heme c</name>
        <dbReference type="ChEBI" id="CHEBI:61717"/>
    </ligand>
</feature>
<feature type="binding site" description="covalent">
    <location>
        <position position="31"/>
    </location>
    <ligand>
        <name>heme c</name>
        <dbReference type="ChEBI" id="CHEBI:61717"/>
    </ligand>
</feature>
<feature type="binding site" description="axial binding residue">
    <location>
        <position position="32"/>
    </location>
    <ligand>
        <name>heme c</name>
        <dbReference type="ChEBI" id="CHEBI:61717"/>
    </ligand>
    <ligandPart>
        <name>Fe</name>
        <dbReference type="ChEBI" id="CHEBI:18248"/>
    </ligandPart>
</feature>
<feature type="binding site" description="axial binding residue">
    <location>
        <position position="86"/>
    </location>
    <ligand>
        <name>heme c</name>
        <dbReference type="ChEBI" id="CHEBI:61717"/>
    </ligand>
    <ligandPart>
        <name>Fe</name>
        <dbReference type="ChEBI" id="CHEBI:18248"/>
    </ligandPart>
</feature>
<feature type="modified residue" description="Pyrrolidone carboxylic acid" evidence="2">
    <location>
        <position position="18"/>
    </location>
</feature>
<feature type="helix" evidence="3">
    <location>
        <begin position="21"/>
        <end position="32"/>
    </location>
</feature>
<feature type="turn" evidence="3">
    <location>
        <begin position="40"/>
        <end position="42"/>
    </location>
</feature>
<feature type="turn" evidence="3">
    <location>
        <begin position="47"/>
        <end position="49"/>
    </location>
</feature>
<feature type="helix" evidence="3">
    <location>
        <begin position="50"/>
        <end position="54"/>
    </location>
</feature>
<feature type="helix" evidence="3">
    <location>
        <begin position="59"/>
        <end position="69"/>
    </location>
</feature>
<feature type="strand" evidence="3">
    <location>
        <begin position="71"/>
        <end position="73"/>
    </location>
</feature>
<feature type="strand" evidence="3">
    <location>
        <begin position="75"/>
        <end position="77"/>
    </location>
</feature>
<feature type="strand" evidence="3">
    <location>
        <begin position="80"/>
        <end position="82"/>
    </location>
</feature>
<feature type="helix" evidence="3">
    <location>
        <begin position="94"/>
        <end position="106"/>
    </location>
</feature>
<feature type="helix" evidence="3">
    <location>
        <begin position="110"/>
        <end position="113"/>
    </location>
</feature>
<feature type="helix" evidence="3">
    <location>
        <begin position="122"/>
        <end position="129"/>
    </location>
</feature>
<feature type="helix" evidence="3">
    <location>
        <begin position="135"/>
        <end position="144"/>
    </location>
</feature>
<reference key="1">
    <citation type="submission" date="1992-05" db="EMBL/GenBank/DDBJ databases">
        <title>Molecular cloning, sequence, and expression of cytochrome c552 from Thermus thermophilus.</title>
        <authorList>
            <person name="Keightley J.A."/>
            <person name="Mather M.W."/>
            <person name="Fee J.A."/>
        </authorList>
    </citation>
    <scope>NUCLEOTIDE SEQUENCE [GENOMIC DNA]</scope>
</reference>
<reference key="2">
    <citation type="submission" date="2004-11" db="EMBL/GenBank/DDBJ databases">
        <title>Complete genome sequence of Thermus thermophilus HB8.</title>
        <authorList>
            <person name="Masui R."/>
            <person name="Kurokawa K."/>
            <person name="Nakagawa N."/>
            <person name="Tokunaga F."/>
            <person name="Koyama Y."/>
            <person name="Shibata T."/>
            <person name="Oshima T."/>
            <person name="Yokoyama S."/>
            <person name="Yasunaga T."/>
            <person name="Kuramitsu S."/>
        </authorList>
    </citation>
    <scope>NUCLEOTIDE SEQUENCE [LARGE SCALE GENOMIC DNA]</scope>
    <source>
        <strain>ATCC 27634 / DSM 579 / HB8</strain>
    </source>
</reference>
<reference key="3">
    <citation type="journal article" date="1985" name="Biochem. Biophys. Res. Commun.">
        <title>Amino acid sequence of cytochrome c-552 from Thermus thermophilus HB8.</title>
        <authorList>
            <person name="Titani K."/>
            <person name="Ericsson L.H."/>
            <person name="Hon-Nami K."/>
            <person name="Miyazawa T."/>
        </authorList>
    </citation>
    <scope>PROTEIN SEQUENCE OF 18-148</scope>
    <scope>PYROGLUTAMATE FORMATION AT GLN-18</scope>
</reference>
<reference key="4">
    <citation type="journal article" date="2000" name="Protein Sci.">
        <title>Integrity of Thermus thermophilus cytochrome c552 synthesized by Escherichia coli cells expressing the host-specific cytochrome c maturation genes, ccmABCDEFGH: biochemical, spectral, and structural characterization of the recombinant protein.</title>
        <authorList>
            <person name="Fee J.A."/>
            <person name="Chen Y."/>
            <person name="Todaro T.R."/>
            <person name="Bren K.L."/>
            <person name="Patel K.M."/>
            <person name="Hill M.G."/>
            <person name="Gomez-Moran E."/>
            <person name="Loehr T.M."/>
            <person name="Ai J."/>
            <person name="Thony-Meyer L."/>
            <person name="Williams P.A."/>
            <person name="Stura E."/>
            <person name="Sridhar V."/>
            <person name="McRee D.E."/>
        </authorList>
    </citation>
    <scope>X-RAY CRYSTALLOGRAPHY (1.8 ANGSTROMS) OF 20-148</scope>
</reference>
<comment type="function">
    <text>This monoheme basic protein appears to function as an electron donor to cytochrome oxidase in T.thermophilus.</text>
</comment>
<comment type="PTM">
    <text>Binds 1 heme c group covalently per subunit.</text>
</comment>
<name>CY552_THET8</name>
<gene>
    <name type="primary">cycA</name>
    <name type="ordered locus">TTHA1423</name>
</gene>
<dbReference type="EMBL" id="M93437">
    <property type="protein sequence ID" value="AAB88580.1"/>
    <property type="molecule type" value="Genomic_DNA"/>
</dbReference>
<dbReference type="EMBL" id="AP008226">
    <property type="protein sequence ID" value="BAD71246.1"/>
    <property type="molecule type" value="Genomic_DNA"/>
</dbReference>
<dbReference type="PIR" id="A00112">
    <property type="entry name" value="CCTW5T"/>
</dbReference>
<dbReference type="RefSeq" id="WP_011228671.1">
    <property type="nucleotide sequence ID" value="NC_006461.1"/>
</dbReference>
<dbReference type="RefSeq" id="YP_144689.1">
    <property type="nucleotide sequence ID" value="NC_006461.1"/>
</dbReference>
<dbReference type="PDB" id="1DT1">
    <property type="method" value="X-ray"/>
    <property type="resolution" value="1.80 A"/>
    <property type="chains" value="A=20-148"/>
</dbReference>
<dbReference type="PDB" id="1FOC">
    <property type="method" value="X-ray"/>
    <property type="resolution" value="3.00 A"/>
    <property type="chains" value="A/B=17-148"/>
</dbReference>
<dbReference type="PDBsum" id="1DT1"/>
<dbReference type="PDBsum" id="1FOC"/>
<dbReference type="SMR" id="Q5SME3"/>
<dbReference type="EnsemblBacteria" id="BAD71246">
    <property type="protein sequence ID" value="BAD71246"/>
    <property type="gene ID" value="BAD71246"/>
</dbReference>
<dbReference type="GeneID" id="3169955"/>
<dbReference type="KEGG" id="ttj:TTHA1423"/>
<dbReference type="PATRIC" id="fig|300852.9.peg.1397"/>
<dbReference type="eggNOG" id="COG2010">
    <property type="taxonomic scope" value="Bacteria"/>
</dbReference>
<dbReference type="HOGENOM" id="CLU_093848_3_0_0"/>
<dbReference type="PhylomeDB" id="Q5SME3"/>
<dbReference type="EvolutionaryTrace" id="Q5SME3"/>
<dbReference type="Proteomes" id="UP000000532">
    <property type="component" value="Chromosome"/>
</dbReference>
<dbReference type="GO" id="GO:0009055">
    <property type="term" value="F:electron transfer activity"/>
    <property type="evidence" value="ECO:0007669"/>
    <property type="project" value="InterPro"/>
</dbReference>
<dbReference type="GO" id="GO:0020037">
    <property type="term" value="F:heme binding"/>
    <property type="evidence" value="ECO:0007669"/>
    <property type="project" value="InterPro"/>
</dbReference>
<dbReference type="GO" id="GO:0046872">
    <property type="term" value="F:metal ion binding"/>
    <property type="evidence" value="ECO:0007669"/>
    <property type="project" value="UniProtKB-KW"/>
</dbReference>
<dbReference type="Gene3D" id="1.10.760.10">
    <property type="entry name" value="Cytochrome c-like domain"/>
    <property type="match status" value="1"/>
</dbReference>
<dbReference type="InterPro" id="IPR009056">
    <property type="entry name" value="Cyt_c-like_dom"/>
</dbReference>
<dbReference type="InterPro" id="IPR036909">
    <property type="entry name" value="Cyt_c-like_dom_sf"/>
</dbReference>
<dbReference type="InterPro" id="IPR051459">
    <property type="entry name" value="Cytochrome_c-type_DH"/>
</dbReference>
<dbReference type="PANTHER" id="PTHR35008:SF8">
    <property type="entry name" value="ALCOHOL DEHYDROGENASE CYTOCHROME C SUBUNIT"/>
    <property type="match status" value="1"/>
</dbReference>
<dbReference type="PANTHER" id="PTHR35008">
    <property type="entry name" value="BLL4482 PROTEIN-RELATED"/>
    <property type="match status" value="1"/>
</dbReference>
<dbReference type="Pfam" id="PF00034">
    <property type="entry name" value="Cytochrom_C"/>
    <property type="match status" value="1"/>
</dbReference>
<dbReference type="SUPFAM" id="SSF46626">
    <property type="entry name" value="Cytochrome c"/>
    <property type="match status" value="1"/>
</dbReference>
<dbReference type="PROSITE" id="PS51007">
    <property type="entry name" value="CYTC"/>
    <property type="match status" value="1"/>
</dbReference>
<proteinExistence type="evidence at protein level"/>